<feature type="chain" id="PRO_1000089570" description="LexA repressor">
    <location>
        <begin position="1"/>
        <end position="202"/>
    </location>
</feature>
<feature type="DNA-binding region" description="H-T-H motif" evidence="1">
    <location>
        <begin position="28"/>
        <end position="48"/>
    </location>
</feature>
<feature type="active site" description="For autocatalytic cleavage activity" evidence="1">
    <location>
        <position position="119"/>
    </location>
</feature>
<feature type="active site" description="For autocatalytic cleavage activity" evidence="1">
    <location>
        <position position="156"/>
    </location>
</feature>
<feature type="site" description="Cleavage; by autolysis" evidence="1">
    <location>
        <begin position="84"/>
        <end position="85"/>
    </location>
</feature>
<evidence type="ECO:0000255" key="1">
    <source>
        <dbReference type="HAMAP-Rule" id="MF_00015"/>
    </source>
</evidence>
<comment type="function">
    <text evidence="1">Represses a number of genes involved in the response to DNA damage (SOS response), including recA and lexA. Binds to the 16 bp palindromic sequence 5'-CTGTATATATATACAG-3'. In the presence of single-stranded DNA, RecA interacts with LexA causing an autocatalytic cleavage which disrupts the DNA-binding part of LexA, leading to derepression of the SOS regulon and eventually DNA repair.</text>
</comment>
<comment type="catalytic activity">
    <reaction evidence="1">
        <text>Hydrolysis of Ala-|-Gly bond in repressor LexA.</text>
        <dbReference type="EC" id="3.4.21.88"/>
    </reaction>
</comment>
<comment type="subunit">
    <text evidence="1">Homodimer.</text>
</comment>
<comment type="similarity">
    <text evidence="1">Belongs to the peptidase S24 family.</text>
</comment>
<accession>B5XXY9</accession>
<gene>
    <name evidence="1" type="primary">lexA</name>
    <name type="ordered locus">KPK_5245</name>
</gene>
<protein>
    <recommendedName>
        <fullName evidence="1">LexA repressor</fullName>
        <ecNumber evidence="1">3.4.21.88</ecNumber>
    </recommendedName>
</protein>
<dbReference type="EC" id="3.4.21.88" evidence="1"/>
<dbReference type="EMBL" id="CP000964">
    <property type="protein sequence ID" value="ACI11706.1"/>
    <property type="molecule type" value="Genomic_DNA"/>
</dbReference>
<dbReference type="SMR" id="B5XXY9"/>
<dbReference type="MEROPS" id="S24.001"/>
<dbReference type="KEGG" id="kpe:KPK_5245"/>
<dbReference type="HOGENOM" id="CLU_066192_45_3_6"/>
<dbReference type="Proteomes" id="UP000001734">
    <property type="component" value="Chromosome"/>
</dbReference>
<dbReference type="GO" id="GO:0003677">
    <property type="term" value="F:DNA binding"/>
    <property type="evidence" value="ECO:0007669"/>
    <property type="project" value="UniProtKB-UniRule"/>
</dbReference>
<dbReference type="GO" id="GO:0004252">
    <property type="term" value="F:serine-type endopeptidase activity"/>
    <property type="evidence" value="ECO:0007669"/>
    <property type="project" value="UniProtKB-UniRule"/>
</dbReference>
<dbReference type="GO" id="GO:0006281">
    <property type="term" value="P:DNA repair"/>
    <property type="evidence" value="ECO:0007669"/>
    <property type="project" value="UniProtKB-UniRule"/>
</dbReference>
<dbReference type="GO" id="GO:0006260">
    <property type="term" value="P:DNA replication"/>
    <property type="evidence" value="ECO:0007669"/>
    <property type="project" value="UniProtKB-UniRule"/>
</dbReference>
<dbReference type="GO" id="GO:0045892">
    <property type="term" value="P:negative regulation of DNA-templated transcription"/>
    <property type="evidence" value="ECO:0007669"/>
    <property type="project" value="UniProtKB-UniRule"/>
</dbReference>
<dbReference type="GO" id="GO:0006508">
    <property type="term" value="P:proteolysis"/>
    <property type="evidence" value="ECO:0007669"/>
    <property type="project" value="InterPro"/>
</dbReference>
<dbReference type="GO" id="GO:0009432">
    <property type="term" value="P:SOS response"/>
    <property type="evidence" value="ECO:0007669"/>
    <property type="project" value="UniProtKB-UniRule"/>
</dbReference>
<dbReference type="CDD" id="cd06529">
    <property type="entry name" value="S24_LexA-like"/>
    <property type="match status" value="1"/>
</dbReference>
<dbReference type="FunFam" id="1.10.10.10:FF:000009">
    <property type="entry name" value="LexA repressor"/>
    <property type="match status" value="1"/>
</dbReference>
<dbReference type="FunFam" id="2.10.109.10:FF:000001">
    <property type="entry name" value="LexA repressor"/>
    <property type="match status" value="1"/>
</dbReference>
<dbReference type="Gene3D" id="2.10.109.10">
    <property type="entry name" value="Umud Fragment, subunit A"/>
    <property type="match status" value="1"/>
</dbReference>
<dbReference type="Gene3D" id="1.10.10.10">
    <property type="entry name" value="Winged helix-like DNA-binding domain superfamily/Winged helix DNA-binding domain"/>
    <property type="match status" value="1"/>
</dbReference>
<dbReference type="HAMAP" id="MF_00015">
    <property type="entry name" value="LexA"/>
    <property type="match status" value="1"/>
</dbReference>
<dbReference type="InterPro" id="IPR006200">
    <property type="entry name" value="LexA"/>
</dbReference>
<dbReference type="InterPro" id="IPR039418">
    <property type="entry name" value="LexA-like"/>
</dbReference>
<dbReference type="InterPro" id="IPR036286">
    <property type="entry name" value="LexA/Signal_pep-like_sf"/>
</dbReference>
<dbReference type="InterPro" id="IPR006199">
    <property type="entry name" value="LexA_DNA-bd_dom"/>
</dbReference>
<dbReference type="InterPro" id="IPR050077">
    <property type="entry name" value="LexA_repressor"/>
</dbReference>
<dbReference type="InterPro" id="IPR006197">
    <property type="entry name" value="Peptidase_S24_LexA"/>
</dbReference>
<dbReference type="InterPro" id="IPR015927">
    <property type="entry name" value="Peptidase_S24_S26A/B/C"/>
</dbReference>
<dbReference type="InterPro" id="IPR036388">
    <property type="entry name" value="WH-like_DNA-bd_sf"/>
</dbReference>
<dbReference type="InterPro" id="IPR036390">
    <property type="entry name" value="WH_DNA-bd_sf"/>
</dbReference>
<dbReference type="NCBIfam" id="TIGR00498">
    <property type="entry name" value="lexA"/>
    <property type="match status" value="1"/>
</dbReference>
<dbReference type="PANTHER" id="PTHR33516">
    <property type="entry name" value="LEXA REPRESSOR"/>
    <property type="match status" value="1"/>
</dbReference>
<dbReference type="PANTHER" id="PTHR33516:SF2">
    <property type="entry name" value="LEXA REPRESSOR-RELATED"/>
    <property type="match status" value="1"/>
</dbReference>
<dbReference type="Pfam" id="PF01726">
    <property type="entry name" value="LexA_DNA_bind"/>
    <property type="match status" value="1"/>
</dbReference>
<dbReference type="Pfam" id="PF00717">
    <property type="entry name" value="Peptidase_S24"/>
    <property type="match status" value="1"/>
</dbReference>
<dbReference type="PRINTS" id="PR00726">
    <property type="entry name" value="LEXASERPTASE"/>
</dbReference>
<dbReference type="SUPFAM" id="SSF51306">
    <property type="entry name" value="LexA/Signal peptidase"/>
    <property type="match status" value="1"/>
</dbReference>
<dbReference type="SUPFAM" id="SSF46785">
    <property type="entry name" value="Winged helix' DNA-binding domain"/>
    <property type="match status" value="1"/>
</dbReference>
<keyword id="KW-0068">Autocatalytic cleavage</keyword>
<keyword id="KW-0227">DNA damage</keyword>
<keyword id="KW-0234">DNA repair</keyword>
<keyword id="KW-0235">DNA replication</keyword>
<keyword id="KW-0238">DNA-binding</keyword>
<keyword id="KW-0378">Hydrolase</keyword>
<keyword id="KW-0678">Repressor</keyword>
<keyword id="KW-0742">SOS response</keyword>
<keyword id="KW-0804">Transcription</keyword>
<keyword id="KW-0805">Transcription regulation</keyword>
<reference key="1">
    <citation type="journal article" date="2008" name="PLoS Genet.">
        <title>Complete genome sequence of the N2-fixing broad host range endophyte Klebsiella pneumoniae 342 and virulence predictions verified in mice.</title>
        <authorList>
            <person name="Fouts D.E."/>
            <person name="Tyler H.L."/>
            <person name="DeBoy R.T."/>
            <person name="Daugherty S."/>
            <person name="Ren Q."/>
            <person name="Badger J.H."/>
            <person name="Durkin A.S."/>
            <person name="Huot H."/>
            <person name="Shrivastava S."/>
            <person name="Kothari S."/>
            <person name="Dodson R.J."/>
            <person name="Mohamoud Y."/>
            <person name="Khouri H."/>
            <person name="Roesch L.F.W."/>
            <person name="Krogfelt K.A."/>
            <person name="Struve C."/>
            <person name="Triplett E.W."/>
            <person name="Methe B.A."/>
        </authorList>
    </citation>
    <scope>NUCLEOTIDE SEQUENCE [LARGE SCALE GENOMIC DNA]</scope>
    <source>
        <strain>342</strain>
    </source>
</reference>
<proteinExistence type="inferred from homology"/>
<sequence>MKALTTRQQEVFDLIRDHISQTGMPPTRAEIAQRLGFRSPNAAEEHLKALARKGAIEIVSGASRGIRLLTEEEHGLPLIGRVAAGEPLLAQQHIEGHYQVDPSMFKPNADFLLRVSGMSMKDIGILDGDLLAVHKTQDVRNGQVVVARIDDEVTVKRLKKQGNVVELLPENSEFTPIVVDLRQQSFTIEGLAVGVIRNGEWL</sequence>
<name>LEXA_KLEP3</name>
<organism>
    <name type="scientific">Klebsiella pneumoniae (strain 342)</name>
    <dbReference type="NCBI Taxonomy" id="507522"/>
    <lineage>
        <taxon>Bacteria</taxon>
        <taxon>Pseudomonadati</taxon>
        <taxon>Pseudomonadota</taxon>
        <taxon>Gammaproteobacteria</taxon>
        <taxon>Enterobacterales</taxon>
        <taxon>Enterobacteriaceae</taxon>
        <taxon>Klebsiella/Raoultella group</taxon>
        <taxon>Klebsiella</taxon>
        <taxon>Klebsiella pneumoniae complex</taxon>
    </lineage>
</organism>